<accession>Q8VYZ0</accession>
<accession>Q3ECM8</accession>
<accession>Q9FVS3</accession>
<sequence length="645" mass="71467">MARDIQLPCDGDGVCMRCKSNPPPEESLTCGTCVTPWHVSCLSSPPKTLASTLQWHCPDCSGEIDPLPVSGGATGFESAGSDLVAAIRAIEADESLSTEEKAKMRQRLLSGKGVEEDDEEEKRKKKGKGKNPNLDVLSALGDNLMCSFCMQLPERPVTKPCGHNACLKCFEKWMGQGKRTCGKCRSIIPEKMAKNPRINSSLVAAIRLAKVSKSAAATTSKVFHFISNQDRPDKAFTTERAKKTGKANAASGKIYVTIPPDHFGPIPAENDPVRNQGLLVGESWEDRLECRQWGAHFPHVAGIAGQSTYGAQSVALSGGYKDDEDHGEWFLYTGSGGRDLSGNKRTNKEQSFDQKFEKSNAALKLSCKLGYPVRVVRSHKEKRSAYAPEEGVRYDGVYRIEKCWRKVGVQGSFKVCRYLFVRCDNEPAPWTSDENGDRPRPIPNIPELNMATDLFERKETPSWDFDEGEGCWKWMKPPPASKKSVNVLAPEERKNLRKAIKAAHSNTMRARLLKEFKCQICQQVLTLPVTTPCAHNFCKACLEAKFAGKTLVRERSTGGRTLRSRKNVLNCPCCPTDISDFLQNPQVNREVAEVIEKLKTQEEDTAELEDEDEGECSGTTPEEDSEQPKKRIKLDTDATVSATIR</sequence>
<feature type="chain" id="PRO_0000396826" description="E3 ubiquitin-protein ligase ORTHRUS 2">
    <location>
        <begin position="1"/>
        <end position="645"/>
    </location>
</feature>
<feature type="domain" description="YDG" evidence="5">
    <location>
        <begin position="273"/>
        <end position="422"/>
    </location>
</feature>
<feature type="zinc finger region" description="PHD-type" evidence="3">
    <location>
        <begin position="12"/>
        <end position="63"/>
    </location>
</feature>
<feature type="zinc finger region" description="RING-type 1" evidence="4">
    <location>
        <begin position="146"/>
        <end position="185"/>
    </location>
</feature>
<feature type="zinc finger region" description="RING-type 2" evidence="4">
    <location>
        <begin position="518"/>
        <end position="575"/>
    </location>
</feature>
<feature type="region of interest" description="Disordered" evidence="6">
    <location>
        <begin position="96"/>
        <end position="133"/>
    </location>
</feature>
<feature type="region of interest" description="Disordered" evidence="6">
    <location>
        <begin position="599"/>
        <end position="645"/>
    </location>
</feature>
<feature type="coiled-coil region" evidence="2">
    <location>
        <begin position="583"/>
        <end position="613"/>
    </location>
</feature>
<feature type="compositionally biased region" description="Acidic residues" evidence="6">
    <location>
        <begin position="603"/>
        <end position="625"/>
    </location>
</feature>
<feature type="compositionally biased region" description="Basic and acidic residues" evidence="6">
    <location>
        <begin position="626"/>
        <end position="636"/>
    </location>
</feature>
<feature type="splice variant" id="VSP_039618" description="In isoform 2." evidence="11">
    <location>
        <begin position="334"/>
        <end position="336"/>
    </location>
</feature>
<feature type="strand" evidence="12">
    <location>
        <begin position="11"/>
        <end position="13"/>
    </location>
</feature>
<feature type="turn" evidence="12">
    <location>
        <begin position="16"/>
        <end position="18"/>
    </location>
</feature>
<feature type="helix" evidence="12">
    <location>
        <begin position="24"/>
        <end position="26"/>
    </location>
</feature>
<feature type="strand" evidence="12">
    <location>
        <begin position="27"/>
        <end position="29"/>
    </location>
</feature>
<feature type="strand" evidence="12">
    <location>
        <begin position="31"/>
        <end position="33"/>
    </location>
</feature>
<feature type="strand" evidence="12">
    <location>
        <begin position="36"/>
        <end position="38"/>
    </location>
</feature>
<feature type="helix" evidence="12">
    <location>
        <begin position="39"/>
        <end position="41"/>
    </location>
</feature>
<feature type="helix" evidence="12">
    <location>
        <begin position="49"/>
        <end position="53"/>
    </location>
</feature>
<feature type="turn" evidence="12">
    <location>
        <begin position="58"/>
        <end position="60"/>
    </location>
</feature>
<protein>
    <recommendedName>
        <fullName>E3 ubiquitin-protein ligase ORTHRUS 2</fullName>
        <ecNumber>2.3.2.27</ecNumber>
    </recommendedName>
    <alternativeName>
        <fullName>Protein VARIANT IN METHYLATION 1</fullName>
    </alternativeName>
    <alternativeName>
        <fullName evidence="11">RING-type E3 ubiquitin transferase ORTHRUS 2</fullName>
    </alternativeName>
</protein>
<gene>
    <name type="primary">ORTH2</name>
    <name type="synonym">VIM1</name>
    <name type="ordered locus">At1g57820</name>
    <name type="ORF">F12K22.14</name>
</gene>
<reference key="1">
    <citation type="journal article" date="2000" name="Nature">
        <title>Sequence and analysis of chromosome 1 of the plant Arabidopsis thaliana.</title>
        <authorList>
            <person name="Theologis A."/>
            <person name="Ecker J.R."/>
            <person name="Palm C.J."/>
            <person name="Federspiel N.A."/>
            <person name="Kaul S."/>
            <person name="White O."/>
            <person name="Alonso J."/>
            <person name="Altafi H."/>
            <person name="Araujo R."/>
            <person name="Bowman C.L."/>
            <person name="Brooks S.Y."/>
            <person name="Buehler E."/>
            <person name="Chan A."/>
            <person name="Chao Q."/>
            <person name="Chen H."/>
            <person name="Cheuk R.F."/>
            <person name="Chin C.W."/>
            <person name="Chung M.K."/>
            <person name="Conn L."/>
            <person name="Conway A.B."/>
            <person name="Conway A.R."/>
            <person name="Creasy T.H."/>
            <person name="Dewar K."/>
            <person name="Dunn P."/>
            <person name="Etgu P."/>
            <person name="Feldblyum T.V."/>
            <person name="Feng J.-D."/>
            <person name="Fong B."/>
            <person name="Fujii C.Y."/>
            <person name="Gill J.E."/>
            <person name="Goldsmith A.D."/>
            <person name="Haas B."/>
            <person name="Hansen N.F."/>
            <person name="Hughes B."/>
            <person name="Huizar L."/>
            <person name="Hunter J.L."/>
            <person name="Jenkins J."/>
            <person name="Johnson-Hopson C."/>
            <person name="Khan S."/>
            <person name="Khaykin E."/>
            <person name="Kim C.J."/>
            <person name="Koo H.L."/>
            <person name="Kremenetskaia I."/>
            <person name="Kurtz D.B."/>
            <person name="Kwan A."/>
            <person name="Lam B."/>
            <person name="Langin-Hooper S."/>
            <person name="Lee A."/>
            <person name="Lee J.M."/>
            <person name="Lenz C.A."/>
            <person name="Li J.H."/>
            <person name="Li Y.-P."/>
            <person name="Lin X."/>
            <person name="Liu S.X."/>
            <person name="Liu Z.A."/>
            <person name="Luros J.S."/>
            <person name="Maiti R."/>
            <person name="Marziali A."/>
            <person name="Militscher J."/>
            <person name="Miranda M."/>
            <person name="Nguyen M."/>
            <person name="Nierman W.C."/>
            <person name="Osborne B.I."/>
            <person name="Pai G."/>
            <person name="Peterson J."/>
            <person name="Pham P.K."/>
            <person name="Rizzo M."/>
            <person name="Rooney T."/>
            <person name="Rowley D."/>
            <person name="Sakano H."/>
            <person name="Salzberg S.L."/>
            <person name="Schwartz J.R."/>
            <person name="Shinn P."/>
            <person name="Southwick A.M."/>
            <person name="Sun H."/>
            <person name="Tallon L.J."/>
            <person name="Tambunga G."/>
            <person name="Toriumi M.J."/>
            <person name="Town C.D."/>
            <person name="Utterback T."/>
            <person name="Van Aken S."/>
            <person name="Vaysberg M."/>
            <person name="Vysotskaia V.S."/>
            <person name="Walker M."/>
            <person name="Wu D."/>
            <person name="Yu G."/>
            <person name="Fraser C.M."/>
            <person name="Venter J.C."/>
            <person name="Davis R.W."/>
        </authorList>
    </citation>
    <scope>NUCLEOTIDE SEQUENCE [LARGE SCALE GENOMIC DNA] (ISOFORM 2)</scope>
    <source>
        <strain>cv. Columbia</strain>
    </source>
</reference>
<reference key="2">
    <citation type="journal article" date="2017" name="Plant J.">
        <title>Araport11: a complete reannotation of the Arabidopsis thaliana reference genome.</title>
        <authorList>
            <person name="Cheng C.Y."/>
            <person name="Krishnakumar V."/>
            <person name="Chan A.P."/>
            <person name="Thibaud-Nissen F."/>
            <person name="Schobel S."/>
            <person name="Town C.D."/>
        </authorList>
    </citation>
    <scope>GENOME REANNOTATION</scope>
    <source>
        <strain>cv. Columbia</strain>
    </source>
</reference>
<reference key="3">
    <citation type="journal article" date="2003" name="Science">
        <title>Empirical analysis of transcriptional activity in the Arabidopsis genome.</title>
        <authorList>
            <person name="Yamada K."/>
            <person name="Lim J."/>
            <person name="Dale J.M."/>
            <person name="Chen H."/>
            <person name="Shinn P."/>
            <person name="Palm C.J."/>
            <person name="Southwick A.M."/>
            <person name="Wu H.C."/>
            <person name="Kim C.J."/>
            <person name="Nguyen M."/>
            <person name="Pham P.K."/>
            <person name="Cheuk R.F."/>
            <person name="Karlin-Newmann G."/>
            <person name="Liu S.X."/>
            <person name="Lam B."/>
            <person name="Sakano H."/>
            <person name="Wu T."/>
            <person name="Yu G."/>
            <person name="Miranda M."/>
            <person name="Quach H.L."/>
            <person name="Tripp M."/>
            <person name="Chang C.H."/>
            <person name="Lee J.M."/>
            <person name="Toriumi M.J."/>
            <person name="Chan M.M."/>
            <person name="Tang C.C."/>
            <person name="Onodera C.S."/>
            <person name="Deng J.M."/>
            <person name="Akiyama K."/>
            <person name="Ansari Y."/>
            <person name="Arakawa T."/>
            <person name="Banh J."/>
            <person name="Banno F."/>
            <person name="Bowser L."/>
            <person name="Brooks S.Y."/>
            <person name="Carninci P."/>
            <person name="Chao Q."/>
            <person name="Choy N."/>
            <person name="Enju A."/>
            <person name="Goldsmith A.D."/>
            <person name="Gurjal M."/>
            <person name="Hansen N.F."/>
            <person name="Hayashizaki Y."/>
            <person name="Johnson-Hopson C."/>
            <person name="Hsuan V.W."/>
            <person name="Iida K."/>
            <person name="Karnes M."/>
            <person name="Khan S."/>
            <person name="Koesema E."/>
            <person name="Ishida J."/>
            <person name="Jiang P.X."/>
            <person name="Jones T."/>
            <person name="Kawai J."/>
            <person name="Kamiya A."/>
            <person name="Meyers C."/>
            <person name="Nakajima M."/>
            <person name="Narusaka M."/>
            <person name="Seki M."/>
            <person name="Sakurai T."/>
            <person name="Satou M."/>
            <person name="Tamse R."/>
            <person name="Vaysberg M."/>
            <person name="Wallender E.K."/>
            <person name="Wong C."/>
            <person name="Yamamura Y."/>
            <person name="Yuan S."/>
            <person name="Shinozaki K."/>
            <person name="Davis R.W."/>
            <person name="Theologis A."/>
            <person name="Ecker J.R."/>
        </authorList>
    </citation>
    <scope>NUCLEOTIDE SEQUENCE [LARGE SCALE MRNA] (ISOFORM 1)</scope>
    <source>
        <strain>cv. Columbia</strain>
    </source>
</reference>
<reference key="4">
    <citation type="journal article" date="2002" name="Genome Biol.">
        <title>Evaluation and classification of RING-finger domains encoded by the Arabidopsis genome.</title>
        <authorList>
            <person name="Kosarev P."/>
            <person name="Mayer K.F.X."/>
            <person name="Hardtke C.S."/>
        </authorList>
    </citation>
    <scope>GENE FAMILY ORGANIZATION</scope>
</reference>
<reference key="5">
    <citation type="journal article" date="2007" name="Curr. Biol.">
        <title>The SRA methyl-cytosine-binding domain links DNA and histone methylation.</title>
        <authorList>
            <person name="Johnson L.M."/>
            <person name="Bostick M."/>
            <person name="Zhang X."/>
            <person name="Kraft E."/>
            <person name="Henderson I."/>
            <person name="Callis J."/>
            <person name="Jacobsen S.E."/>
        </authorList>
    </citation>
    <scope>FUNCTION</scope>
</reference>
<reference key="6">
    <citation type="journal article" date="2007" name="Genes Dev.">
        <title>VIM1, a methylcytosine-binding protein required for centromeric heterochromatinization.</title>
        <authorList>
            <person name="Woo H.R."/>
            <person name="Pontes O."/>
            <person name="Pikaard C.S."/>
            <person name="Richards E.J."/>
        </authorList>
    </citation>
    <scope>FUNCTION</scope>
    <scope>SUBCELLULAR LOCATION</scope>
    <scope>INTERACTION WITH CENH3; HTB2; HTR3 AND H4</scope>
</reference>
<reference key="7">
    <citation type="journal article" date="2008" name="Plant J.">
        <title>ORTH/VIM proteins that regulate DNA methylation are functional ubiquitin E3 ligases.</title>
        <authorList>
            <person name="Kraft E."/>
            <person name="Bostick M."/>
            <person name="Jacobsen S.E."/>
            <person name="Callis J."/>
        </authorList>
    </citation>
    <scope>FUNCTION</scope>
    <scope>SUBCELLULAR LOCATION</scope>
    <scope>GENE FAMILY</scope>
    <scope>NOMENCLATURE</scope>
</reference>
<reference key="8">
    <citation type="journal article" date="2008" name="PLoS Genet.">
        <title>Three SRA-domain methylcytosine-binding proteins cooperate to maintain global CpG methylation and epigenetic silencing in Arabidopsis.</title>
        <authorList>
            <person name="Woo H.R."/>
            <person name="Dittmer T.A."/>
            <person name="Richards E.J."/>
        </authorList>
    </citation>
    <scope>FUNCTION</scope>
    <scope>DISRUPTION PHENOTYPE</scope>
    <scope>TISSUE SPECIFICITY</scope>
    <scope>SUBCELLULAR LOCATION</scope>
</reference>
<keyword id="KW-0002">3D-structure</keyword>
<keyword id="KW-0025">Alternative splicing</keyword>
<keyword id="KW-0156">Chromatin regulator</keyword>
<keyword id="KW-0175">Coiled coil</keyword>
<keyword id="KW-0238">DNA-binding</keyword>
<keyword id="KW-0479">Metal-binding</keyword>
<keyword id="KW-0539">Nucleus</keyword>
<keyword id="KW-1185">Reference proteome</keyword>
<keyword id="KW-0677">Repeat</keyword>
<keyword id="KW-0808">Transferase</keyword>
<keyword id="KW-0833">Ubl conjugation pathway</keyword>
<keyword id="KW-0862">Zinc</keyword>
<keyword id="KW-0863">Zinc-finger</keyword>
<name>ORTH2_ARATH</name>
<dbReference type="EC" id="2.3.2.27"/>
<dbReference type="EMBL" id="AC079732">
    <property type="protein sequence ID" value="AAG29238.1"/>
    <property type="status" value="ALT_SEQ"/>
    <property type="molecule type" value="Genomic_DNA"/>
</dbReference>
<dbReference type="EMBL" id="CP002684">
    <property type="protein sequence ID" value="AEE33469.1"/>
    <property type="molecule type" value="Genomic_DNA"/>
</dbReference>
<dbReference type="EMBL" id="CP002684">
    <property type="protein sequence ID" value="AEE33470.1"/>
    <property type="molecule type" value="Genomic_DNA"/>
</dbReference>
<dbReference type="EMBL" id="CP002684">
    <property type="protein sequence ID" value="ANM59484.1"/>
    <property type="molecule type" value="Genomic_DNA"/>
</dbReference>
<dbReference type="EMBL" id="AY065438">
    <property type="protein sequence ID" value="AAL38879.1"/>
    <property type="molecule type" value="mRNA"/>
</dbReference>
<dbReference type="EMBL" id="AY117235">
    <property type="protein sequence ID" value="AAM51310.1"/>
    <property type="molecule type" value="mRNA"/>
</dbReference>
<dbReference type="PIR" id="E96612">
    <property type="entry name" value="E96612"/>
</dbReference>
<dbReference type="RefSeq" id="NP_001319260.1">
    <molecule id="Q8VYZ0-1"/>
    <property type="nucleotide sequence ID" value="NM_001333806.1"/>
</dbReference>
<dbReference type="RefSeq" id="NP_176092.2">
    <molecule id="Q8VYZ0-1"/>
    <property type="nucleotide sequence ID" value="NM_104576.6"/>
</dbReference>
<dbReference type="RefSeq" id="NP_974045.1">
    <molecule id="Q8VYZ0-2"/>
    <property type="nucleotide sequence ID" value="NM_202316.2"/>
</dbReference>
<dbReference type="PDB" id="7DUF">
    <property type="method" value="X-ray"/>
    <property type="resolution" value="2.61 A"/>
    <property type="chains" value="A/B=1-63"/>
</dbReference>
<dbReference type="PDBsum" id="7DUF"/>
<dbReference type="SMR" id="Q8VYZ0"/>
<dbReference type="BioGRID" id="27382">
    <property type="interactions" value="1"/>
</dbReference>
<dbReference type="FunCoup" id="Q8VYZ0">
    <property type="interactions" value="2450"/>
</dbReference>
<dbReference type="STRING" id="3702.Q8VYZ0"/>
<dbReference type="PaxDb" id="3702-AT1G57820.1"/>
<dbReference type="ProteomicsDB" id="248668">
    <molecule id="Q8VYZ0-1"/>
</dbReference>
<dbReference type="EnsemblPlants" id="AT1G57820.1">
    <molecule id="Q8VYZ0-1"/>
    <property type="protein sequence ID" value="AT1G57820.1"/>
    <property type="gene ID" value="AT1G57820"/>
</dbReference>
<dbReference type="EnsemblPlants" id="AT1G57820.2">
    <molecule id="Q8VYZ0-2"/>
    <property type="protein sequence ID" value="AT1G57820.2"/>
    <property type="gene ID" value="AT1G57820"/>
</dbReference>
<dbReference type="EnsemblPlants" id="AT1G57820.3">
    <molecule id="Q8VYZ0-1"/>
    <property type="protein sequence ID" value="AT1G57820.3"/>
    <property type="gene ID" value="AT1G57820"/>
</dbReference>
<dbReference type="GeneID" id="842157"/>
<dbReference type="Gramene" id="AT1G57820.1">
    <molecule id="Q8VYZ0-1"/>
    <property type="protein sequence ID" value="AT1G57820.1"/>
    <property type="gene ID" value="AT1G57820"/>
</dbReference>
<dbReference type="Gramene" id="AT1G57820.2">
    <molecule id="Q8VYZ0-2"/>
    <property type="protein sequence ID" value="AT1G57820.2"/>
    <property type="gene ID" value="AT1G57820"/>
</dbReference>
<dbReference type="Gramene" id="AT1G57820.3">
    <molecule id="Q8VYZ0-1"/>
    <property type="protein sequence ID" value="AT1G57820.3"/>
    <property type="gene ID" value="AT1G57820"/>
</dbReference>
<dbReference type="KEGG" id="ath:AT1G57820"/>
<dbReference type="Araport" id="AT1G57820"/>
<dbReference type="TAIR" id="AT1G57820">
    <property type="gene designation" value="VIM1"/>
</dbReference>
<dbReference type="eggNOG" id="ENOG502QSQ8">
    <property type="taxonomic scope" value="Eukaryota"/>
</dbReference>
<dbReference type="HOGENOM" id="CLU_016281_0_0_1"/>
<dbReference type="InParanoid" id="Q8VYZ0"/>
<dbReference type="OMA" id="CRNAIPP"/>
<dbReference type="PhylomeDB" id="Q8VYZ0"/>
<dbReference type="UniPathway" id="UPA00143"/>
<dbReference type="PRO" id="PR:Q8VYZ0"/>
<dbReference type="Proteomes" id="UP000006548">
    <property type="component" value="Chromosome 1"/>
</dbReference>
<dbReference type="ExpressionAtlas" id="Q8VYZ0">
    <property type="expression patterns" value="baseline and differential"/>
</dbReference>
<dbReference type="GO" id="GO:0010369">
    <property type="term" value="C:chromocenter"/>
    <property type="evidence" value="ECO:0000314"/>
    <property type="project" value="TAIR"/>
</dbReference>
<dbReference type="GO" id="GO:0005634">
    <property type="term" value="C:nucleus"/>
    <property type="evidence" value="ECO:0000314"/>
    <property type="project" value="UniProtKB"/>
</dbReference>
<dbReference type="GO" id="GO:0003682">
    <property type="term" value="F:chromatin binding"/>
    <property type="evidence" value="ECO:0000314"/>
    <property type="project" value="TAIR"/>
</dbReference>
<dbReference type="GO" id="GO:0010385">
    <property type="term" value="F:double-stranded methylated DNA binding"/>
    <property type="evidence" value="ECO:0000314"/>
    <property type="project" value="TAIR"/>
</dbReference>
<dbReference type="GO" id="GO:0042393">
    <property type="term" value="F:histone binding"/>
    <property type="evidence" value="ECO:0000353"/>
    <property type="project" value="UniProtKB"/>
</dbReference>
<dbReference type="GO" id="GO:0008327">
    <property type="term" value="F:methyl-CpG binding"/>
    <property type="evidence" value="ECO:0000314"/>
    <property type="project" value="TAIR"/>
</dbReference>
<dbReference type="GO" id="GO:0010428">
    <property type="term" value="F:methyl-CpNpG binding"/>
    <property type="evidence" value="ECO:0000314"/>
    <property type="project" value="TAIR"/>
</dbReference>
<dbReference type="GO" id="GO:0010429">
    <property type="term" value="F:methyl-CpNpN binding"/>
    <property type="evidence" value="ECO:0000314"/>
    <property type="project" value="TAIR"/>
</dbReference>
<dbReference type="GO" id="GO:0004842">
    <property type="term" value="F:ubiquitin-protein transferase activity"/>
    <property type="evidence" value="ECO:0000314"/>
    <property type="project" value="TAIR"/>
</dbReference>
<dbReference type="GO" id="GO:0008270">
    <property type="term" value="F:zinc ion binding"/>
    <property type="evidence" value="ECO:0007669"/>
    <property type="project" value="UniProtKB-KW"/>
</dbReference>
<dbReference type="GO" id="GO:0051301">
    <property type="term" value="P:cell division"/>
    <property type="evidence" value="ECO:0000314"/>
    <property type="project" value="TAIR"/>
</dbReference>
<dbReference type="GO" id="GO:0006325">
    <property type="term" value="P:chromatin organization"/>
    <property type="evidence" value="ECO:0000353"/>
    <property type="project" value="TAIR"/>
</dbReference>
<dbReference type="GO" id="GO:0044027">
    <property type="term" value="P:negative regulation of gene expression via chromosomal CpG island methylation"/>
    <property type="evidence" value="ECO:0000315"/>
    <property type="project" value="UniProtKB"/>
</dbReference>
<dbReference type="GO" id="GO:0031508">
    <property type="term" value="P:pericentric heterochromatin formation"/>
    <property type="evidence" value="ECO:0000315"/>
    <property type="project" value="TAIR"/>
</dbReference>
<dbReference type="GO" id="GO:0016567">
    <property type="term" value="P:protein ubiquitination"/>
    <property type="evidence" value="ECO:0000314"/>
    <property type="project" value="TAIR"/>
</dbReference>
<dbReference type="CDD" id="cd23138">
    <property type="entry name" value="RING-HC_ORTHRUS_rpt1"/>
    <property type="match status" value="1"/>
</dbReference>
<dbReference type="CDD" id="cd23139">
    <property type="entry name" value="RING-HC_ORTHRUS_rpt2"/>
    <property type="match status" value="1"/>
</dbReference>
<dbReference type="FunFam" id="2.30.280.10:FF:000002">
    <property type="entry name" value="E3 ubiquitin-protein ligase ORTHRUS 2"/>
    <property type="match status" value="1"/>
</dbReference>
<dbReference type="FunFam" id="3.30.40.10:FF:000472">
    <property type="entry name" value="E3 ubiquitin-protein ligase ORTHRUS 2"/>
    <property type="match status" value="1"/>
</dbReference>
<dbReference type="FunFam" id="3.30.40.10:FF:000737">
    <property type="entry name" value="E3 ubiquitin-protein ligase ORTHRUS 3"/>
    <property type="match status" value="1"/>
</dbReference>
<dbReference type="Gene3D" id="2.30.280.10">
    <property type="entry name" value="SRA-YDG"/>
    <property type="match status" value="1"/>
</dbReference>
<dbReference type="Gene3D" id="3.30.40.10">
    <property type="entry name" value="Zinc/RING finger domain, C3HC4 (zinc finger)"/>
    <property type="match status" value="3"/>
</dbReference>
<dbReference type="InterPro" id="IPR015947">
    <property type="entry name" value="PUA-like_sf"/>
</dbReference>
<dbReference type="InterPro" id="IPR047498">
    <property type="entry name" value="RING-HC_ORTHRUS_rpt1"/>
</dbReference>
<dbReference type="InterPro" id="IPR047529">
    <property type="entry name" value="RING-HC_ORTHRUS_rpt2"/>
</dbReference>
<dbReference type="InterPro" id="IPR036987">
    <property type="entry name" value="SRA-YDG_sf"/>
</dbReference>
<dbReference type="InterPro" id="IPR003105">
    <property type="entry name" value="SRA_YDG"/>
</dbReference>
<dbReference type="InterPro" id="IPR045134">
    <property type="entry name" value="UHRF1/2-like"/>
</dbReference>
<dbReference type="InterPro" id="IPR019786">
    <property type="entry name" value="Zinc_finger_PHD-type_CS"/>
</dbReference>
<dbReference type="InterPro" id="IPR027370">
    <property type="entry name" value="Znf-RING_euk"/>
</dbReference>
<dbReference type="InterPro" id="IPR011011">
    <property type="entry name" value="Znf_FYVE_PHD"/>
</dbReference>
<dbReference type="InterPro" id="IPR001965">
    <property type="entry name" value="Znf_PHD"/>
</dbReference>
<dbReference type="InterPro" id="IPR019787">
    <property type="entry name" value="Znf_PHD-finger"/>
</dbReference>
<dbReference type="InterPro" id="IPR001841">
    <property type="entry name" value="Znf_RING"/>
</dbReference>
<dbReference type="InterPro" id="IPR013083">
    <property type="entry name" value="Znf_RING/FYVE/PHD"/>
</dbReference>
<dbReference type="InterPro" id="IPR017907">
    <property type="entry name" value="Znf_RING_CS"/>
</dbReference>
<dbReference type="PANTHER" id="PTHR14140:SF46">
    <property type="entry name" value="E3 UBIQUITIN-PROTEIN LIGASE ORTHRUS 1-RELATED"/>
    <property type="match status" value="1"/>
</dbReference>
<dbReference type="PANTHER" id="PTHR14140">
    <property type="entry name" value="E3 UBIQUITIN-PROTEIN LIGASE UHRF-RELATED"/>
    <property type="match status" value="1"/>
</dbReference>
<dbReference type="Pfam" id="PF02182">
    <property type="entry name" value="SAD_SRA"/>
    <property type="match status" value="1"/>
</dbReference>
<dbReference type="Pfam" id="PF13920">
    <property type="entry name" value="zf-C3HC4_3"/>
    <property type="match status" value="1"/>
</dbReference>
<dbReference type="Pfam" id="PF13445">
    <property type="entry name" value="zf-RING_UBOX"/>
    <property type="match status" value="1"/>
</dbReference>
<dbReference type="SMART" id="SM00249">
    <property type="entry name" value="PHD"/>
    <property type="match status" value="1"/>
</dbReference>
<dbReference type="SMART" id="SM00184">
    <property type="entry name" value="RING"/>
    <property type="match status" value="2"/>
</dbReference>
<dbReference type="SMART" id="SM00466">
    <property type="entry name" value="SRA"/>
    <property type="match status" value="1"/>
</dbReference>
<dbReference type="SUPFAM" id="SSF57903">
    <property type="entry name" value="FYVE/PHD zinc finger"/>
    <property type="match status" value="1"/>
</dbReference>
<dbReference type="SUPFAM" id="SSF88697">
    <property type="entry name" value="PUA domain-like"/>
    <property type="match status" value="1"/>
</dbReference>
<dbReference type="SUPFAM" id="SSF57850">
    <property type="entry name" value="RING/U-box"/>
    <property type="match status" value="2"/>
</dbReference>
<dbReference type="PROSITE" id="PS51015">
    <property type="entry name" value="YDG"/>
    <property type="match status" value="1"/>
</dbReference>
<dbReference type="PROSITE" id="PS01359">
    <property type="entry name" value="ZF_PHD_1"/>
    <property type="match status" value="1"/>
</dbReference>
<dbReference type="PROSITE" id="PS50016">
    <property type="entry name" value="ZF_PHD_2"/>
    <property type="match status" value="1"/>
</dbReference>
<dbReference type="PROSITE" id="PS00518">
    <property type="entry name" value="ZF_RING_1"/>
    <property type="match status" value="1"/>
</dbReference>
<dbReference type="PROSITE" id="PS50089">
    <property type="entry name" value="ZF_RING_2"/>
    <property type="match status" value="2"/>
</dbReference>
<comment type="function">
    <text evidence="7 8 9 10">E3 ubiquitin-protein ligase. Participates in CpG methylation-dependent transcriptional regulation and epigenetic transcriptional silencing. Mediates ubiquitination with the E2 ubiquitin-conjugating enzyme UBC11. Promotes methylation-mediated gene silencing leading, for example, to early flowering. Associates with methylated DNA, and can bind to CpG, CpNpG, and CpNpN DNA motifs, with a strong preference for methylated forms, and with highest affinity for CpG substrate. Probably acts at the DNA methylation?histone interface to maintain centromeric heterochromatin.</text>
</comment>
<comment type="catalytic activity">
    <reaction>
        <text>S-ubiquitinyl-[E2 ubiquitin-conjugating enzyme]-L-cysteine + [acceptor protein]-L-lysine = [E2 ubiquitin-conjugating enzyme]-L-cysteine + N(6)-ubiquitinyl-[acceptor protein]-L-lysine.</text>
        <dbReference type="EC" id="2.3.2.27"/>
    </reaction>
</comment>
<comment type="pathway">
    <text>Protein modification; protein ubiquitination.</text>
</comment>
<comment type="subunit">
    <text evidence="8">Interacts with histones CENH3, HTB2, HTR3 and H4.</text>
</comment>
<comment type="subcellular location">
    <subcellularLocation>
        <location evidence="5 8 9 10">Nucleus</location>
    </subcellularLocation>
    <text>Broadly distributed in the nucleus and enriched in the heterochromatic chromocenters.</text>
</comment>
<comment type="alternative products">
    <event type="alternative splicing"/>
    <isoform>
        <id>Q8VYZ0-1</id>
        <name>1</name>
        <sequence type="displayed"/>
    </isoform>
    <isoform>
        <id>Q8VYZ0-2</id>
        <name>2</name>
        <sequence type="described" ref="VSP_039618"/>
    </isoform>
</comment>
<comment type="tissue specificity">
    <text evidence="10">Mostly expressed in inflorescence and, to a lower extent, in leaves.</text>
</comment>
<comment type="domain">
    <text evidence="1">The RING fingers are required for ubiquitin ligase activity.</text>
</comment>
<comment type="domain">
    <text evidence="1">The YDG domain mediates the interaction with histone H3.</text>
</comment>
<comment type="disruption phenotype">
    <text evidence="10">Centromere DNA hypomethylation and centromeric heterochromatin decondensation in interphase. Decreased DNA methylation primarily at CpG sites in genic regions, as well as repeated sequences in heterochromatic regions. Released transcriptional silencing at heterochromatin regions. Ectopic CpHpH methylation in the 5S rRNA genes against a background of CpG hypomethylation.</text>
</comment>
<comment type="miscellaneous">
    <text>ORTH2 is missing in cv. Bor-4 that exhibit a centromere repeat hypomethylation phenotype.</text>
</comment>
<comment type="sequence caution" evidence="11">
    <conflict type="erroneous gene model prediction">
        <sequence resource="EMBL-CDS" id="AAG29238"/>
    </conflict>
</comment>
<evidence type="ECO:0000250" key="1"/>
<evidence type="ECO:0000255" key="2"/>
<evidence type="ECO:0000255" key="3">
    <source>
        <dbReference type="PROSITE-ProRule" id="PRU00146"/>
    </source>
</evidence>
<evidence type="ECO:0000255" key="4">
    <source>
        <dbReference type="PROSITE-ProRule" id="PRU00175"/>
    </source>
</evidence>
<evidence type="ECO:0000255" key="5">
    <source>
        <dbReference type="PROSITE-ProRule" id="PRU00358"/>
    </source>
</evidence>
<evidence type="ECO:0000256" key="6">
    <source>
        <dbReference type="SAM" id="MobiDB-lite"/>
    </source>
</evidence>
<evidence type="ECO:0000269" key="7">
    <source>
    </source>
</evidence>
<evidence type="ECO:0000269" key="8">
    <source>
    </source>
</evidence>
<evidence type="ECO:0000269" key="9">
    <source>
    </source>
</evidence>
<evidence type="ECO:0000269" key="10">
    <source>
    </source>
</evidence>
<evidence type="ECO:0000305" key="11"/>
<evidence type="ECO:0007829" key="12">
    <source>
        <dbReference type="PDB" id="7DUF"/>
    </source>
</evidence>
<proteinExistence type="evidence at protein level"/>
<organism>
    <name type="scientific">Arabidopsis thaliana</name>
    <name type="common">Mouse-ear cress</name>
    <dbReference type="NCBI Taxonomy" id="3702"/>
    <lineage>
        <taxon>Eukaryota</taxon>
        <taxon>Viridiplantae</taxon>
        <taxon>Streptophyta</taxon>
        <taxon>Embryophyta</taxon>
        <taxon>Tracheophyta</taxon>
        <taxon>Spermatophyta</taxon>
        <taxon>Magnoliopsida</taxon>
        <taxon>eudicotyledons</taxon>
        <taxon>Gunneridae</taxon>
        <taxon>Pentapetalae</taxon>
        <taxon>rosids</taxon>
        <taxon>malvids</taxon>
        <taxon>Brassicales</taxon>
        <taxon>Brassicaceae</taxon>
        <taxon>Camelineae</taxon>
        <taxon>Arabidopsis</taxon>
    </lineage>
</organism>